<keyword id="KW-0067">ATP-binding</keyword>
<keyword id="KW-1003">Cell membrane</keyword>
<keyword id="KW-0460">Magnesium</keyword>
<keyword id="KW-0464">Manganese</keyword>
<keyword id="KW-0472">Membrane</keyword>
<keyword id="KW-0479">Metal-binding</keyword>
<keyword id="KW-0547">Nucleotide-binding</keyword>
<keyword id="KW-0597">Phosphoprotein</keyword>
<keyword id="KW-1185">Reference proteome</keyword>
<keyword id="KW-1278">Translocase</keyword>
<keyword id="KW-0812">Transmembrane</keyword>
<keyword id="KW-1133">Transmembrane helix</keyword>
<proteinExistence type="inferred from homology"/>
<comment type="function">
    <text evidence="1">High affinity, slow turnover Mn(2+) transporting ATPase.</text>
</comment>
<comment type="catalytic activity">
    <reaction evidence="1">
        <text>Mn(2+)(in) + ATP + H2O = Mn(2+)(out) + ADP + phosphate + H(+)</text>
        <dbReference type="Rhea" id="RHEA:66820"/>
        <dbReference type="ChEBI" id="CHEBI:15377"/>
        <dbReference type="ChEBI" id="CHEBI:15378"/>
        <dbReference type="ChEBI" id="CHEBI:29035"/>
        <dbReference type="ChEBI" id="CHEBI:30616"/>
        <dbReference type="ChEBI" id="CHEBI:43474"/>
        <dbReference type="ChEBI" id="CHEBI:456216"/>
        <dbReference type="EC" id="7.2.2.22"/>
    </reaction>
</comment>
<comment type="subcellular location">
    <subcellularLocation>
        <location evidence="1">Cell membrane</location>
        <topology evidence="1">Multi-pass membrane protein</topology>
    </subcellularLocation>
</comment>
<comment type="similarity">
    <text evidence="4">Belongs to the cation transport ATPase (P-type) (TC 3.A.3) family. Type IB subfamily.</text>
</comment>
<feature type="chain" id="PRO_0000426891" description="Manganese-exporting P-type ATPase">
    <location>
        <begin position="1"/>
        <end position="718"/>
    </location>
</feature>
<feature type="transmembrane region" description="Helical" evidence="1">
    <location>
        <begin position="87"/>
        <end position="105"/>
    </location>
</feature>
<feature type="transmembrane region" description="Helical" evidence="1">
    <location>
        <begin position="128"/>
        <end position="146"/>
    </location>
</feature>
<feature type="transmembrane region" description="Helical" evidence="1">
    <location>
        <begin position="154"/>
        <end position="168"/>
    </location>
</feature>
<feature type="transmembrane region" description="Helical" evidence="1">
    <location>
        <begin position="177"/>
        <end position="191"/>
    </location>
</feature>
<feature type="transmembrane region" description="Helical" evidence="1">
    <location>
        <begin position="327"/>
        <end position="351"/>
    </location>
</feature>
<feature type="transmembrane region" description="Helical" evidence="1">
    <location>
        <begin position="357"/>
        <end position="375"/>
    </location>
</feature>
<feature type="transmembrane region" description="Helical" evidence="1">
    <location>
        <begin position="661"/>
        <end position="680"/>
    </location>
</feature>
<feature type="transmembrane region" description="Helical" evidence="1">
    <location>
        <begin position="690"/>
        <end position="709"/>
    </location>
</feature>
<feature type="domain" description="HMA" evidence="3">
    <location>
        <begin position="11"/>
        <end position="78"/>
    </location>
</feature>
<feature type="active site" description="4-aspartylphosphate intermediate" evidence="2">
    <location>
        <position position="408"/>
    </location>
</feature>
<feature type="binding site" evidence="2">
    <location>
        <position position="408"/>
    </location>
    <ligand>
        <name>Mg(2+)</name>
        <dbReference type="ChEBI" id="CHEBI:18420"/>
    </ligand>
</feature>
<feature type="binding site" evidence="2">
    <location>
        <position position="410"/>
    </location>
    <ligand>
        <name>Mg(2+)</name>
        <dbReference type="ChEBI" id="CHEBI:18420"/>
    </ligand>
</feature>
<feature type="binding site" evidence="2">
    <location>
        <position position="610"/>
    </location>
    <ligand>
        <name>Mg(2+)</name>
        <dbReference type="ChEBI" id="CHEBI:18420"/>
    </ligand>
</feature>
<dbReference type="EC" id="7.2.2.22" evidence="1"/>
<dbReference type="EMBL" id="AE000516">
    <property type="protein sequence ID" value="AAK47711.1"/>
    <property type="molecule type" value="Genomic_DNA"/>
</dbReference>
<dbReference type="PIR" id="G70978">
    <property type="entry name" value="G70978"/>
</dbReference>
<dbReference type="RefSeq" id="WP_003899995.1">
    <property type="nucleotide sequence ID" value="NZ_KK341227.1"/>
</dbReference>
<dbReference type="SMR" id="P9WPT4"/>
<dbReference type="KEGG" id="mtc:MT3370"/>
<dbReference type="PATRIC" id="fig|83331.31.peg.3627"/>
<dbReference type="HOGENOM" id="CLU_001771_6_3_11"/>
<dbReference type="Proteomes" id="UP000001020">
    <property type="component" value="Chromosome"/>
</dbReference>
<dbReference type="GO" id="GO:0005886">
    <property type="term" value="C:plasma membrane"/>
    <property type="evidence" value="ECO:0007669"/>
    <property type="project" value="UniProtKB-SubCell"/>
</dbReference>
<dbReference type="GO" id="GO:0005524">
    <property type="term" value="F:ATP binding"/>
    <property type="evidence" value="ECO:0007669"/>
    <property type="project" value="UniProtKB-KW"/>
</dbReference>
<dbReference type="GO" id="GO:0016887">
    <property type="term" value="F:ATP hydrolysis activity"/>
    <property type="evidence" value="ECO:0007669"/>
    <property type="project" value="InterPro"/>
</dbReference>
<dbReference type="GO" id="GO:0005507">
    <property type="term" value="F:copper ion binding"/>
    <property type="evidence" value="ECO:0007669"/>
    <property type="project" value="TreeGrafter"/>
</dbReference>
<dbReference type="GO" id="GO:0043682">
    <property type="term" value="F:P-type divalent copper transporter activity"/>
    <property type="evidence" value="ECO:0007669"/>
    <property type="project" value="TreeGrafter"/>
</dbReference>
<dbReference type="GO" id="GO:0140613">
    <property type="term" value="F:P-type manganese transporter activity"/>
    <property type="evidence" value="ECO:0007669"/>
    <property type="project" value="RHEA"/>
</dbReference>
<dbReference type="GO" id="GO:0055070">
    <property type="term" value="P:copper ion homeostasis"/>
    <property type="evidence" value="ECO:0007669"/>
    <property type="project" value="TreeGrafter"/>
</dbReference>
<dbReference type="CDD" id="cd02079">
    <property type="entry name" value="P-type_ATPase_HM"/>
    <property type="match status" value="1"/>
</dbReference>
<dbReference type="FunFam" id="3.40.1110.10:FF:000052">
    <property type="entry name" value="Copper-translocating P-type ATPase"/>
    <property type="match status" value="1"/>
</dbReference>
<dbReference type="Gene3D" id="3.40.1110.10">
    <property type="entry name" value="Calcium-transporting ATPase, cytoplasmic domain N"/>
    <property type="match status" value="1"/>
</dbReference>
<dbReference type="Gene3D" id="2.70.150.10">
    <property type="entry name" value="Calcium-transporting ATPase, cytoplasmic transduction domain A"/>
    <property type="match status" value="1"/>
</dbReference>
<dbReference type="Gene3D" id="3.40.50.1000">
    <property type="entry name" value="HAD superfamily/HAD-like"/>
    <property type="match status" value="1"/>
</dbReference>
<dbReference type="InterPro" id="IPR023299">
    <property type="entry name" value="ATPase_P-typ_cyto_dom_N"/>
</dbReference>
<dbReference type="InterPro" id="IPR018303">
    <property type="entry name" value="ATPase_P-typ_P_site"/>
</dbReference>
<dbReference type="InterPro" id="IPR023298">
    <property type="entry name" value="ATPase_P-typ_TM_dom_sf"/>
</dbReference>
<dbReference type="InterPro" id="IPR008250">
    <property type="entry name" value="ATPase_P-typ_transduc_dom_A_sf"/>
</dbReference>
<dbReference type="InterPro" id="IPR036412">
    <property type="entry name" value="HAD-like_sf"/>
</dbReference>
<dbReference type="InterPro" id="IPR023214">
    <property type="entry name" value="HAD_sf"/>
</dbReference>
<dbReference type="InterPro" id="IPR006121">
    <property type="entry name" value="HMA_dom"/>
</dbReference>
<dbReference type="InterPro" id="IPR027256">
    <property type="entry name" value="P-typ_ATPase_IB"/>
</dbReference>
<dbReference type="InterPro" id="IPR001757">
    <property type="entry name" value="P_typ_ATPase"/>
</dbReference>
<dbReference type="InterPro" id="IPR044492">
    <property type="entry name" value="P_typ_ATPase_HD_dom"/>
</dbReference>
<dbReference type="NCBIfam" id="TIGR01511">
    <property type="entry name" value="ATPase-IB1_Cu"/>
    <property type="match status" value="1"/>
</dbReference>
<dbReference type="NCBIfam" id="TIGR01525">
    <property type="entry name" value="ATPase-IB_hvy"/>
    <property type="match status" value="1"/>
</dbReference>
<dbReference type="NCBIfam" id="TIGR01494">
    <property type="entry name" value="ATPase_P-type"/>
    <property type="match status" value="1"/>
</dbReference>
<dbReference type="PANTHER" id="PTHR43520">
    <property type="entry name" value="ATP7, ISOFORM B"/>
    <property type="match status" value="1"/>
</dbReference>
<dbReference type="PANTHER" id="PTHR43520:SF8">
    <property type="entry name" value="P-TYPE CU(+) TRANSPORTER"/>
    <property type="match status" value="1"/>
</dbReference>
<dbReference type="Pfam" id="PF00122">
    <property type="entry name" value="E1-E2_ATPase"/>
    <property type="match status" value="1"/>
</dbReference>
<dbReference type="Pfam" id="PF00702">
    <property type="entry name" value="Hydrolase"/>
    <property type="match status" value="1"/>
</dbReference>
<dbReference type="PRINTS" id="PR00119">
    <property type="entry name" value="CATATPASE"/>
</dbReference>
<dbReference type="SFLD" id="SFLDG00002">
    <property type="entry name" value="C1.7:_P-type_atpase_like"/>
    <property type="match status" value="1"/>
</dbReference>
<dbReference type="SFLD" id="SFLDF00027">
    <property type="entry name" value="p-type_atpase"/>
    <property type="match status" value="1"/>
</dbReference>
<dbReference type="SUPFAM" id="SSF81653">
    <property type="entry name" value="Calcium ATPase, transduction domain A"/>
    <property type="match status" value="1"/>
</dbReference>
<dbReference type="SUPFAM" id="SSF81665">
    <property type="entry name" value="Calcium ATPase, transmembrane domain M"/>
    <property type="match status" value="1"/>
</dbReference>
<dbReference type="SUPFAM" id="SSF56784">
    <property type="entry name" value="HAD-like"/>
    <property type="match status" value="1"/>
</dbReference>
<dbReference type="PROSITE" id="PS00154">
    <property type="entry name" value="ATPASE_E1_E2"/>
    <property type="match status" value="1"/>
</dbReference>
<dbReference type="PROSITE" id="PS50846">
    <property type="entry name" value="HMA_2"/>
    <property type="match status" value="1"/>
</dbReference>
<reference key="1">
    <citation type="journal article" date="2002" name="J. Bacteriol.">
        <title>Whole-genome comparison of Mycobacterium tuberculosis clinical and laboratory strains.</title>
        <authorList>
            <person name="Fleischmann R.D."/>
            <person name="Alland D."/>
            <person name="Eisen J.A."/>
            <person name="Carpenter L."/>
            <person name="White O."/>
            <person name="Peterson J.D."/>
            <person name="DeBoy R.T."/>
            <person name="Dodson R.J."/>
            <person name="Gwinn M.L."/>
            <person name="Haft D.H."/>
            <person name="Hickey E.K."/>
            <person name="Kolonay J.F."/>
            <person name="Nelson W.C."/>
            <person name="Umayam L.A."/>
            <person name="Ermolaeva M.D."/>
            <person name="Salzberg S.L."/>
            <person name="Delcher A."/>
            <person name="Utterback T.R."/>
            <person name="Weidman J.F."/>
            <person name="Khouri H.M."/>
            <person name="Gill J."/>
            <person name="Mikula A."/>
            <person name="Bishai W."/>
            <person name="Jacobs W.R. Jr."/>
            <person name="Venter J.C."/>
            <person name="Fraser C.M."/>
        </authorList>
    </citation>
    <scope>NUCLEOTIDE SEQUENCE [LARGE SCALE GENOMIC DNA]</scope>
    <source>
        <strain>CDC 1551 / Oshkosh</strain>
    </source>
</reference>
<organism>
    <name type="scientific">Mycobacterium tuberculosis (strain CDC 1551 / Oshkosh)</name>
    <dbReference type="NCBI Taxonomy" id="83331"/>
    <lineage>
        <taxon>Bacteria</taxon>
        <taxon>Bacillati</taxon>
        <taxon>Actinomycetota</taxon>
        <taxon>Actinomycetes</taxon>
        <taxon>Mycobacteriales</taxon>
        <taxon>Mycobacteriaceae</taxon>
        <taxon>Mycobacterium</taxon>
        <taxon>Mycobacterium tuberculosis complex</taxon>
    </lineage>
</organism>
<evidence type="ECO:0000250" key="1">
    <source>
        <dbReference type="UniProtKB" id="P9WPT5"/>
    </source>
</evidence>
<evidence type="ECO:0000250" key="2">
    <source>
        <dbReference type="UniProtKB" id="Q5ZWR1"/>
    </source>
</evidence>
<evidence type="ECO:0000255" key="3">
    <source>
        <dbReference type="PROSITE-ProRule" id="PRU00280"/>
    </source>
</evidence>
<evidence type="ECO:0000305" key="4"/>
<sequence length="718" mass="76495">MTLEVVSDAAGRMRVKVDWVRCDSRRAVAVEEAVAKQNGVRVVHAYPRTGSVVVWYSPRRADRAAVLAAIKGAAHVAAELIPARAPHSAEIRNTDVLRMVIGGVALALLGVRRYVFARPPLLGTTGRTVATGVTIFTGYPFLRGALRSLRSGKAGTDALVSAATVASLILRENVVALTVLWLLNIGEYLQDLTLRRTRRAISELLRGNQDTAWVRLTDPSAGSDAATEIQVPIDTVQIGDEVVVHEHVAIPVDGEVVDGEAIVNQSAITGENLPVSVVVGTRVHAGSVVVRGRVVVRAHAVGNQTTIGRIISRVEEAQLDRAPIQTVGENFSRRFVPTSFIVSAIALLITGDVRRAMTMLLIACPCAVGLSTPTAISAAIGNGARRGILIKGGSHLEQAGRVDAIVFDKTGTLTVGRPVVTNIVAMHKDWEPEQVLAYAASSEIHSRHPLAEAVIRSTEERRISIPPHEECEVLVGLGMRTWADGRTLLLGSPSLLRAEKVRVSKKASEWVDKLRRQAETPLLLAVDGTLVGLISLRDEVRPEAAQVLTKLRANGIRRIVMLTGDHPEIAQVVADELGIDEWRAEVMPEDKLAAVRELQDDGYVVGMVGDGINDAPALAAADIGIAMGLAGTDVAVETADVALANDDLHRLLDVGDLGERAVDVIRQNYGMSIAVNAAGLLIGAGGALSPVLAAILHNASSVAVVANSSRLIRYRLDR</sequence>
<name>CTPC_MYCTO</name>
<protein>
    <recommendedName>
        <fullName evidence="1">Manganese-exporting P-type ATPase</fullName>
        <ecNumber evidence="1">7.2.2.22</ecNumber>
    </recommendedName>
</protein>
<accession>P9WPT4</accession>
<accession>L0TF47</accession>
<accession>O66027</accession>
<accession>P0A502</accession>
<accession>P96875</accession>
<gene>
    <name type="primary">ctpC</name>
    <name type="synonym">mtaA</name>
    <name type="ordered locus">MT3370</name>
</gene>